<reference key="1">
    <citation type="journal article" date="2005" name="Proc. Natl. Acad. Sci. U.S.A.">
        <title>The psychrophilic lifestyle as revealed by the genome sequence of Colwellia psychrerythraea 34H through genomic and proteomic analyses.</title>
        <authorList>
            <person name="Methe B.A."/>
            <person name="Nelson K.E."/>
            <person name="Deming J.W."/>
            <person name="Momen B."/>
            <person name="Melamud E."/>
            <person name="Zhang X."/>
            <person name="Moult J."/>
            <person name="Madupu R."/>
            <person name="Nelson W.C."/>
            <person name="Dodson R.J."/>
            <person name="Brinkac L.M."/>
            <person name="Daugherty S.C."/>
            <person name="Durkin A.S."/>
            <person name="DeBoy R.T."/>
            <person name="Kolonay J.F."/>
            <person name="Sullivan S.A."/>
            <person name="Zhou L."/>
            <person name="Davidsen T.M."/>
            <person name="Wu M."/>
            <person name="Huston A.L."/>
            <person name="Lewis M."/>
            <person name="Weaver B."/>
            <person name="Weidman J.F."/>
            <person name="Khouri H."/>
            <person name="Utterback T.R."/>
            <person name="Feldblyum T.V."/>
            <person name="Fraser C.M."/>
        </authorList>
    </citation>
    <scope>NUCLEOTIDE SEQUENCE [LARGE SCALE GENOMIC DNA]</scope>
    <source>
        <strain>34H / ATCC BAA-681</strain>
    </source>
</reference>
<protein>
    <recommendedName>
        <fullName evidence="1">Ribose-5-phosphate isomerase A</fullName>
        <ecNumber evidence="1">5.3.1.6</ecNumber>
    </recommendedName>
    <alternativeName>
        <fullName evidence="1">Phosphoriboisomerase A</fullName>
        <shortName evidence="1">PRI</shortName>
    </alternativeName>
</protein>
<sequence length="218" mass="23279">MTQDEMKNAAAIKALEFIENDTIVGVGTGSTVNFFIEALASMKDKIAGAVSSSEESTKRLKAHGIEVFDLNSVDVLDVYVDGADEITRHMSMIKGGGAALTREKIVAAVAKKFICIADDSKQVKVLGNFPLPVEVIPMARSYVARELVKLGGDPVYRQGVTTDNGNVILDVYNLEILDPKALETQINAIVGVVTNGLFALRGADILVLGSKDGIQVIQ</sequence>
<keyword id="KW-0413">Isomerase</keyword>
<comment type="function">
    <text evidence="1">Catalyzes the reversible conversion of ribose-5-phosphate to ribulose 5-phosphate.</text>
</comment>
<comment type="catalytic activity">
    <reaction evidence="1">
        <text>aldehydo-D-ribose 5-phosphate = D-ribulose 5-phosphate</text>
        <dbReference type="Rhea" id="RHEA:14657"/>
        <dbReference type="ChEBI" id="CHEBI:58121"/>
        <dbReference type="ChEBI" id="CHEBI:58273"/>
        <dbReference type="EC" id="5.3.1.6"/>
    </reaction>
</comment>
<comment type="pathway">
    <text evidence="1">Carbohydrate degradation; pentose phosphate pathway; D-ribose 5-phosphate from D-ribulose 5-phosphate (non-oxidative stage): step 1/1.</text>
</comment>
<comment type="subunit">
    <text evidence="1">Homodimer.</text>
</comment>
<comment type="similarity">
    <text evidence="1">Belongs to the ribose 5-phosphate isomerase family.</text>
</comment>
<dbReference type="EC" id="5.3.1.6" evidence="1"/>
<dbReference type="EMBL" id="CP000083">
    <property type="protein sequence ID" value="AAZ25095.1"/>
    <property type="molecule type" value="Genomic_DNA"/>
</dbReference>
<dbReference type="RefSeq" id="WP_011042381.1">
    <property type="nucleotide sequence ID" value="NC_003910.7"/>
</dbReference>
<dbReference type="SMR" id="Q485H8"/>
<dbReference type="STRING" id="167879.CPS_1545"/>
<dbReference type="KEGG" id="cps:CPS_1545"/>
<dbReference type="eggNOG" id="COG0120">
    <property type="taxonomic scope" value="Bacteria"/>
</dbReference>
<dbReference type="HOGENOM" id="CLU_056590_1_1_6"/>
<dbReference type="UniPathway" id="UPA00115">
    <property type="reaction ID" value="UER00412"/>
</dbReference>
<dbReference type="Proteomes" id="UP000000547">
    <property type="component" value="Chromosome"/>
</dbReference>
<dbReference type="GO" id="GO:0005829">
    <property type="term" value="C:cytosol"/>
    <property type="evidence" value="ECO:0007669"/>
    <property type="project" value="TreeGrafter"/>
</dbReference>
<dbReference type="GO" id="GO:0004751">
    <property type="term" value="F:ribose-5-phosphate isomerase activity"/>
    <property type="evidence" value="ECO:0007669"/>
    <property type="project" value="UniProtKB-UniRule"/>
</dbReference>
<dbReference type="GO" id="GO:0006014">
    <property type="term" value="P:D-ribose metabolic process"/>
    <property type="evidence" value="ECO:0007669"/>
    <property type="project" value="TreeGrafter"/>
</dbReference>
<dbReference type="GO" id="GO:0009052">
    <property type="term" value="P:pentose-phosphate shunt, non-oxidative branch"/>
    <property type="evidence" value="ECO:0007669"/>
    <property type="project" value="UniProtKB-UniRule"/>
</dbReference>
<dbReference type="CDD" id="cd01398">
    <property type="entry name" value="RPI_A"/>
    <property type="match status" value="1"/>
</dbReference>
<dbReference type="FunFam" id="3.30.70.260:FF:000004">
    <property type="entry name" value="Ribose-5-phosphate isomerase A"/>
    <property type="match status" value="1"/>
</dbReference>
<dbReference type="FunFam" id="3.40.50.1360:FF:000001">
    <property type="entry name" value="Ribose-5-phosphate isomerase A"/>
    <property type="match status" value="1"/>
</dbReference>
<dbReference type="Gene3D" id="3.30.70.260">
    <property type="match status" value="1"/>
</dbReference>
<dbReference type="Gene3D" id="3.40.50.1360">
    <property type="match status" value="1"/>
</dbReference>
<dbReference type="HAMAP" id="MF_00170">
    <property type="entry name" value="Rib_5P_isom_A"/>
    <property type="match status" value="1"/>
</dbReference>
<dbReference type="InterPro" id="IPR037171">
    <property type="entry name" value="NagB/RpiA_transferase-like"/>
</dbReference>
<dbReference type="InterPro" id="IPR020672">
    <property type="entry name" value="Ribose5P_isomerase_typA_subgr"/>
</dbReference>
<dbReference type="InterPro" id="IPR004788">
    <property type="entry name" value="Ribose5P_isomerase_type_A"/>
</dbReference>
<dbReference type="NCBIfam" id="NF001924">
    <property type="entry name" value="PRK00702.1"/>
    <property type="match status" value="1"/>
</dbReference>
<dbReference type="NCBIfam" id="TIGR00021">
    <property type="entry name" value="rpiA"/>
    <property type="match status" value="1"/>
</dbReference>
<dbReference type="PANTHER" id="PTHR11934">
    <property type="entry name" value="RIBOSE-5-PHOSPHATE ISOMERASE"/>
    <property type="match status" value="1"/>
</dbReference>
<dbReference type="PANTHER" id="PTHR11934:SF0">
    <property type="entry name" value="RIBOSE-5-PHOSPHATE ISOMERASE"/>
    <property type="match status" value="1"/>
</dbReference>
<dbReference type="Pfam" id="PF06026">
    <property type="entry name" value="Rib_5-P_isom_A"/>
    <property type="match status" value="1"/>
</dbReference>
<dbReference type="SUPFAM" id="SSF75445">
    <property type="entry name" value="D-ribose-5-phosphate isomerase (RpiA), lid domain"/>
    <property type="match status" value="1"/>
</dbReference>
<dbReference type="SUPFAM" id="SSF100950">
    <property type="entry name" value="NagB/RpiA/CoA transferase-like"/>
    <property type="match status" value="1"/>
</dbReference>
<proteinExistence type="inferred from homology"/>
<accession>Q485H8</accession>
<gene>
    <name evidence="1" type="primary">rpiA</name>
    <name type="ordered locus">CPS_1545</name>
</gene>
<evidence type="ECO:0000255" key="1">
    <source>
        <dbReference type="HAMAP-Rule" id="MF_00170"/>
    </source>
</evidence>
<feature type="chain" id="PRO_1000016921" description="Ribose-5-phosphate isomerase A">
    <location>
        <begin position="1"/>
        <end position="218"/>
    </location>
</feature>
<feature type="active site" description="Proton acceptor" evidence="1">
    <location>
        <position position="103"/>
    </location>
</feature>
<feature type="binding site" evidence="1">
    <location>
        <begin position="28"/>
        <end position="31"/>
    </location>
    <ligand>
        <name>substrate</name>
    </ligand>
</feature>
<feature type="binding site" evidence="1">
    <location>
        <begin position="81"/>
        <end position="84"/>
    </location>
    <ligand>
        <name>substrate</name>
    </ligand>
</feature>
<feature type="binding site" evidence="1">
    <location>
        <begin position="94"/>
        <end position="97"/>
    </location>
    <ligand>
        <name>substrate</name>
    </ligand>
</feature>
<feature type="binding site" evidence="1">
    <location>
        <position position="121"/>
    </location>
    <ligand>
        <name>substrate</name>
    </ligand>
</feature>
<organism>
    <name type="scientific">Colwellia psychrerythraea (strain 34H / ATCC BAA-681)</name>
    <name type="common">Vibrio psychroerythus</name>
    <dbReference type="NCBI Taxonomy" id="167879"/>
    <lineage>
        <taxon>Bacteria</taxon>
        <taxon>Pseudomonadati</taxon>
        <taxon>Pseudomonadota</taxon>
        <taxon>Gammaproteobacteria</taxon>
        <taxon>Alteromonadales</taxon>
        <taxon>Colwelliaceae</taxon>
        <taxon>Colwellia</taxon>
    </lineage>
</organism>
<name>RPIA_COLP3</name>